<feature type="chain" id="PRO_0000399525" description="Altered inheritance of mitochondria protein 21">
    <location>
        <begin position="1"/>
        <end position="679"/>
    </location>
</feature>
<feature type="region of interest" description="Disordered" evidence="3">
    <location>
        <begin position="1"/>
        <end position="85"/>
    </location>
</feature>
<feature type="region of interest" description="Disordered" evidence="3">
    <location>
        <begin position="111"/>
        <end position="522"/>
    </location>
</feature>
<feature type="region of interest" description="Interaction with SH3 domain of ABP1" evidence="1">
    <location>
        <begin position="383"/>
        <end position="396"/>
    </location>
</feature>
<feature type="region of interest" description="Disordered" evidence="3">
    <location>
        <begin position="549"/>
        <end position="580"/>
    </location>
</feature>
<feature type="region of interest" description="Disordered" evidence="3">
    <location>
        <begin position="593"/>
        <end position="679"/>
    </location>
</feature>
<feature type="compositionally biased region" description="Basic and acidic residues" evidence="3">
    <location>
        <begin position="9"/>
        <end position="19"/>
    </location>
</feature>
<feature type="compositionally biased region" description="Polar residues" evidence="3">
    <location>
        <begin position="133"/>
        <end position="149"/>
    </location>
</feature>
<feature type="compositionally biased region" description="Polar residues" evidence="3">
    <location>
        <begin position="167"/>
        <end position="178"/>
    </location>
</feature>
<feature type="compositionally biased region" description="Basic and acidic residues" evidence="3">
    <location>
        <begin position="179"/>
        <end position="213"/>
    </location>
</feature>
<feature type="compositionally biased region" description="Basic and acidic residues" evidence="3">
    <location>
        <begin position="243"/>
        <end position="272"/>
    </location>
</feature>
<feature type="compositionally biased region" description="Polar residues" evidence="3">
    <location>
        <begin position="296"/>
        <end position="323"/>
    </location>
</feature>
<feature type="compositionally biased region" description="Basic and acidic residues" evidence="3">
    <location>
        <begin position="339"/>
        <end position="361"/>
    </location>
</feature>
<feature type="compositionally biased region" description="Basic and acidic residues" evidence="3">
    <location>
        <begin position="372"/>
        <end position="383"/>
    </location>
</feature>
<feature type="compositionally biased region" description="Polar residues" evidence="3">
    <location>
        <begin position="414"/>
        <end position="427"/>
    </location>
</feature>
<feature type="compositionally biased region" description="Polar residues" evidence="3">
    <location>
        <begin position="437"/>
        <end position="452"/>
    </location>
</feature>
<feature type="compositionally biased region" description="Basic and acidic residues" evidence="3">
    <location>
        <begin position="471"/>
        <end position="482"/>
    </location>
</feature>
<feature type="compositionally biased region" description="Basic residues" evidence="3">
    <location>
        <begin position="501"/>
        <end position="512"/>
    </location>
</feature>
<feature type="compositionally biased region" description="Basic and acidic residues" evidence="3">
    <location>
        <begin position="556"/>
        <end position="576"/>
    </location>
</feature>
<feature type="compositionally biased region" description="Polar residues" evidence="3">
    <location>
        <begin position="603"/>
        <end position="614"/>
    </location>
</feature>
<feature type="compositionally biased region" description="Basic and acidic residues" evidence="3">
    <location>
        <begin position="667"/>
        <end position="679"/>
    </location>
</feature>
<feature type="modified residue" description="Phosphothreonine" evidence="2">
    <location>
        <position position="18"/>
    </location>
</feature>
<feature type="modified residue" description="Phosphoserine" evidence="2">
    <location>
        <position position="36"/>
    </location>
</feature>
<feature type="modified residue" description="Phosphothreonine" evidence="2">
    <location>
        <position position="58"/>
    </location>
</feature>
<feature type="modified residue" description="Phosphoserine" evidence="2">
    <location>
        <position position="70"/>
    </location>
</feature>
<feature type="modified residue" description="Phosphothreonine" evidence="2">
    <location>
        <position position="85"/>
    </location>
</feature>
<feature type="modified residue" description="Phosphoserine" evidence="2">
    <location>
        <position position="104"/>
    </location>
</feature>
<feature type="modified residue" description="Phosphoserine" evidence="2">
    <location>
        <position position="183"/>
    </location>
</feature>
<feature type="modified residue" description="Phosphoserine" evidence="2">
    <location>
        <position position="206"/>
    </location>
</feature>
<feature type="modified residue" description="Phosphoserine" evidence="2">
    <location>
        <position position="231"/>
    </location>
</feature>
<feature type="modified residue" description="Phosphothreonine" evidence="2">
    <location>
        <position position="277"/>
    </location>
</feature>
<feature type="modified residue" description="Phosphoserine" evidence="2">
    <location>
        <position position="284"/>
    </location>
</feature>
<feature type="modified residue" description="Phosphoserine" evidence="2">
    <location>
        <position position="324"/>
    </location>
</feature>
<feature type="modified residue" description="Phosphothreonine" evidence="2">
    <location>
        <position position="552"/>
    </location>
</feature>
<feature type="modified residue" description="Phosphoserine" evidence="2">
    <location>
        <position position="576"/>
    </location>
</feature>
<feature type="modified residue" description="Phosphoserine" evidence="2">
    <location>
        <position position="620"/>
    </location>
</feature>
<feature type="modified residue" description="Phosphoserine" evidence="2">
    <location>
        <position position="623"/>
    </location>
</feature>
<feature type="modified residue" description="Phosphoserine" evidence="2">
    <location>
        <position position="625"/>
    </location>
</feature>
<feature type="modified residue" description="Phosphoserine" evidence="2">
    <location>
        <position position="627"/>
    </location>
</feature>
<feature type="modified residue" description="Phosphoserine" evidence="2">
    <location>
        <position position="667"/>
    </location>
</feature>
<feature type="modified residue" description="Phosphoserine" evidence="2">
    <location>
        <position position="671"/>
    </location>
</feature>
<feature type="modified residue" description="Phosphoserine" evidence="2">
    <location>
        <position position="675"/>
    </location>
</feature>
<feature type="modified residue" description="Phosphoserine" evidence="2">
    <location>
        <position position="678"/>
    </location>
</feature>
<evidence type="ECO:0000250" key="1"/>
<evidence type="ECO:0000250" key="2">
    <source>
        <dbReference type="UniProtKB" id="P40563"/>
    </source>
</evidence>
<evidence type="ECO:0000256" key="3">
    <source>
        <dbReference type="SAM" id="MobiDB-lite"/>
    </source>
</evidence>
<evidence type="ECO:0000305" key="4"/>
<dbReference type="EMBL" id="ACFL01000009">
    <property type="protein sequence ID" value="EEU09052.1"/>
    <property type="molecule type" value="Genomic_DNA"/>
</dbReference>
<dbReference type="OrthoDB" id="8332at4893"/>
<dbReference type="Proteomes" id="UP000008073">
    <property type="component" value="Unassembled WGS sequence"/>
</dbReference>
<dbReference type="GO" id="GO:0030479">
    <property type="term" value="C:actin cortical patch"/>
    <property type="evidence" value="ECO:0007669"/>
    <property type="project" value="UniProtKB-SubCell"/>
</dbReference>
<dbReference type="InterPro" id="IPR021582">
    <property type="entry name" value="Aim21"/>
</dbReference>
<dbReference type="Pfam" id="PF11489">
    <property type="entry name" value="Aim21"/>
    <property type="match status" value="1"/>
</dbReference>
<proteinExistence type="inferred from homology"/>
<organism>
    <name type="scientific">Saccharomyces cerevisiae (strain JAY291)</name>
    <name type="common">Baker's yeast</name>
    <dbReference type="NCBI Taxonomy" id="574961"/>
    <lineage>
        <taxon>Eukaryota</taxon>
        <taxon>Fungi</taxon>
        <taxon>Dikarya</taxon>
        <taxon>Ascomycota</taxon>
        <taxon>Saccharomycotina</taxon>
        <taxon>Saccharomycetes</taxon>
        <taxon>Saccharomycetales</taxon>
        <taxon>Saccharomycetaceae</taxon>
        <taxon>Saccharomyces</taxon>
    </lineage>
</organism>
<accession>C7GJG9</accession>
<protein>
    <recommendedName>
        <fullName>Altered inheritance of mitochondria protein 21</fullName>
    </recommendedName>
</protein>
<comment type="function">
    <text evidence="1">Involved in mitochondrial migration along actin filaments.</text>
</comment>
<comment type="subunit">
    <text evidence="1">Interacts with ribosomes. Interacts with ABP1.</text>
</comment>
<comment type="subcellular location">
    <subcellularLocation>
        <location evidence="1">Cytoplasm</location>
        <location evidence="1">Cytoskeleton</location>
        <location evidence="1">Actin patch</location>
    </subcellularLocation>
    <text evidence="1">Cortical actin patches. Localizes at the shmoo tip.</text>
</comment>
<comment type="similarity">
    <text evidence="4">Belongs to the AIM21 family.</text>
</comment>
<gene>
    <name type="primary">AIM21</name>
    <name type="ORF">C1Q_00326</name>
</gene>
<reference key="1">
    <citation type="journal article" date="2009" name="Genome Res.">
        <title>Genome structure of a Saccharomyces cerevisiae strain widely used in bioethanol production.</title>
        <authorList>
            <person name="Argueso J.L."/>
            <person name="Carazzolle M.F."/>
            <person name="Mieczkowski P.A."/>
            <person name="Duarte F.M."/>
            <person name="Netto O.V.C."/>
            <person name="Missawa S.K."/>
            <person name="Galzerani F."/>
            <person name="Costa G.G.L."/>
            <person name="Vidal R.O."/>
            <person name="Noronha M.F."/>
            <person name="Dominska M."/>
            <person name="Andrietta M.G.S."/>
            <person name="Andrietta S.R."/>
            <person name="Cunha A.F."/>
            <person name="Gomes L.H."/>
            <person name="Tavares F.C.A."/>
            <person name="Alcarde A.R."/>
            <person name="Dietrich F.S."/>
            <person name="McCusker J.H."/>
            <person name="Petes T.D."/>
            <person name="Pereira G.A.G."/>
        </authorList>
    </citation>
    <scope>NUCLEOTIDE SEQUENCE [LARGE SCALE GENOMIC DNA]</scope>
    <source>
        <strain>JAY291</strain>
    </source>
</reference>
<sequence>MSSEVTPKVPERPSRRKTSELFPLSGSESGDIEANSEPPTPAGTPNVPTRRPILKAKTMTSFESGMDQESLPKVPLQRPVRRSTTEELNNVMNNTSKELEEIESLISKHNIHNVSRKKSPTSVEEGKVAAIHQNGQRSASDNKTSTNPSPLEKNEHEGAEGNEFAISPSNLVNKSNNEVTEHSDSEDLTEKQKVHAALDNEAGDRSHFEEKLIPGDMKVQVDVSKDVEEGSLNALPPSGITESDDKAEKFTKHPESSLEELQKHQEQQEEKIFQNPTDEESTTSLNEKQEGKDNMEVNSQPQGPSDTETVIAATSSNVPSQIASEEENDVPVIPRSRPKKDFEAHVQKEELPNTQEKRVSEECDSTLISTEEESKIPKIPSERPKRRAPPPVPKKPSSRIAAFQEMLQKQQQQDLHNNGNSSATTASADIAKKHTDSSITSDTTKADFTSKLNGLFALPGMVNPGQLPPSLEKKLSSPDTESKLGPQDQSQAKTGPLGGTRRGRGPRGRKLPSKVASVEKIEEDDNTNKIEIFNNWNVSSSFSKEKVLIDTTPGEQAERALDEKSKSIPEEQREQSPNKMEAALCPFELDEKEKLPANAESDPLSQLPQTNTVGNRKAISEESLSPSEAIANRDQNDTTEIQEQQMEDQMEVDMERELSGGYEDVDSALHSEEASFHSL</sequence>
<name>AIM21_YEAS2</name>
<keyword id="KW-0963">Cytoplasm</keyword>
<keyword id="KW-0206">Cytoskeleton</keyword>
<keyword id="KW-0597">Phosphoprotein</keyword>